<proteinExistence type="evidence at transcript level"/>
<gene>
    <name evidence="12" type="primary">LB29</name>
</gene>
<name>LGB2_VICFA</name>
<comment type="function">
    <text evidence="3 6">Leghemoglobin that reversibly binds oxygen O(2) through a pentacoordinated heme iron (By similarity). In root nodules, facilitates the diffusion of oxygen to the bacteroids while preventing the bacterial nitrogenase from being inactivated by buffering dioxygen, nitric oxide and carbon monoxide, and promoting the formation of reactive oxygen species (ROS, e.g. H(2)O(2)) (By similarity). This role is essential for symbiotic nitrogen fixation (SNF) (By similarity).</text>
</comment>
<comment type="subunit">
    <text evidence="4">Monomer.</text>
</comment>
<comment type="subcellular location">
    <subcellularLocation>
        <location evidence="4">Cytoplasm</location>
        <location evidence="4">Cytosol</location>
    </subcellularLocation>
    <subcellularLocation>
        <location evidence="4">Nucleus</location>
    </subcellularLocation>
</comment>
<comment type="tissue specificity">
    <text evidence="8 9 10">Accumulates in root nodules after inoculation by bacteria of the genus Rhizobium (PubMed:14714869, PubMed:15668224, PubMed:9002275). Expressed in mycorrhizal roots in the presence of the mycorrhizal fungus Glomus fasciculatum (PubMed:14714869, PubMed:15668224, PubMed:9002275).</text>
</comment>
<comment type="developmental stage">
    <text evidence="8 9">Activated in root arbuscule-containing cells during symbiosis with arbuscular mycorrhizal fungi (e.g. Glomus intraradices and G.fasciculatum), mostly at later stages of arbuscule development (PubMed:14714869, PubMed:15668224). Expressed in bacteria-infected cells of root nodules (PubMed:14714869, PubMed:15668224).</text>
</comment>
<comment type="PTM">
    <text evidence="2">Nitrated in effective nodules and particularly in hypoxic conditions; this mechanism may play a protective role in the symbiosis by buffering toxic peroxynitrite NO(2)(-). Nitration level decrease during nodule senescence.</text>
</comment>
<comment type="PTM">
    <text evidence="5">Phosphorylation at Ser-45 disrupts the molecular environment of its porphyrin ring oxygen binding pocket, thus leading to a reduced oxygen consumption and to the delivery of oxygen O(2) to symbiosomes.</text>
</comment>
<comment type="similarity">
    <text evidence="13">Belongs to the plant globin family.</text>
</comment>
<keyword id="KW-0963">Cytoplasm</keyword>
<keyword id="KW-0349">Heme</keyword>
<keyword id="KW-0408">Iron</keyword>
<keyword id="KW-0479">Metal-binding</keyword>
<keyword id="KW-0944">Nitration</keyword>
<keyword id="KW-0535">Nitrogen fixation</keyword>
<keyword id="KW-0536">Nodulation</keyword>
<keyword id="KW-0539">Nucleus</keyword>
<keyword id="KW-0561">Oxygen transport</keyword>
<keyword id="KW-0597">Phosphoprotein</keyword>
<keyword id="KW-0813">Transport</keyword>
<feature type="initiator methionine" description="Removed" evidence="1">
    <location>
        <position position="1"/>
    </location>
</feature>
<feature type="chain" id="PRO_0000193007" description="Leghemoglobin 29">
    <location>
        <begin position="2"/>
        <end position="148"/>
    </location>
</feature>
<feature type="domain" description="Globin" evidence="7">
    <location>
        <begin position="2"/>
        <end position="148"/>
    </location>
</feature>
<feature type="binding site" evidence="4">
    <location>
        <position position="45"/>
    </location>
    <ligand>
        <name>heme b</name>
        <dbReference type="ChEBI" id="CHEBI:60344"/>
    </ligand>
</feature>
<feature type="binding site" evidence="4">
    <location>
        <position position="63"/>
    </location>
    <ligand>
        <name>O2</name>
        <dbReference type="ChEBI" id="CHEBI:15379"/>
    </ligand>
</feature>
<feature type="binding site" description="proximal binding residue" evidence="7">
    <location>
        <position position="95"/>
    </location>
    <ligand>
        <name>heme b</name>
        <dbReference type="ChEBI" id="CHEBI:60344"/>
    </ligand>
    <ligandPart>
        <name>Fe</name>
        <dbReference type="ChEBI" id="CHEBI:18248"/>
    </ligandPart>
</feature>
<feature type="binding site" evidence="4">
    <location>
        <position position="98"/>
    </location>
    <ligand>
        <name>heme b</name>
        <dbReference type="ChEBI" id="CHEBI:60344"/>
    </ligand>
</feature>
<feature type="modified residue" description="Nitrated tyrosine" evidence="2">
    <location>
        <position position="30"/>
    </location>
</feature>
<feature type="modified residue" description="Phosphoserine" evidence="5">
    <location>
        <position position="45"/>
    </location>
</feature>
<feature type="modified residue" description="Nitrated tyrosine" evidence="2">
    <location>
        <position position="136"/>
    </location>
</feature>
<organism>
    <name type="scientific">Vicia faba</name>
    <name type="common">Broad bean</name>
    <name type="synonym">Faba vulgaris</name>
    <dbReference type="NCBI Taxonomy" id="3906"/>
    <lineage>
        <taxon>Eukaryota</taxon>
        <taxon>Viridiplantae</taxon>
        <taxon>Streptophyta</taxon>
        <taxon>Embryophyta</taxon>
        <taxon>Tracheophyta</taxon>
        <taxon>Spermatophyta</taxon>
        <taxon>Magnoliopsida</taxon>
        <taxon>eudicotyledons</taxon>
        <taxon>Gunneridae</taxon>
        <taxon>Pentapetalae</taxon>
        <taxon>rosids</taxon>
        <taxon>fabids</taxon>
        <taxon>Fabales</taxon>
        <taxon>Fabaceae</taxon>
        <taxon>Papilionoideae</taxon>
        <taxon>50 kb inversion clade</taxon>
        <taxon>NPAAA clade</taxon>
        <taxon>Hologalegina</taxon>
        <taxon>IRL clade</taxon>
        <taxon>Fabeae</taxon>
        <taxon>Vicia</taxon>
    </lineage>
</organism>
<sequence>MEFTLRQEALVNSSWEAFNQNLPLFSVLFYTFILEKAPIAKNMFSVLKDANEIPLANPSINAHTEMVFEMVRDAAAQLQTTGQVVLGDTTLGVVHTQKRVDGLHFMVVKEALLKTIKEAVGDKWSEELSNAWEIAYDGLAVAIMKEMS</sequence>
<protein>
    <recommendedName>
        <fullName evidence="12">Leghemoglobin 29</fullName>
        <shortName evidence="11 12">VfLb29</shortName>
    </recommendedName>
</protein>
<accession>P93848</accession>
<evidence type="ECO:0000250" key="1">
    <source>
        <dbReference type="UniProtKB" id="P02232"/>
    </source>
</evidence>
<evidence type="ECO:0000250" key="2">
    <source>
        <dbReference type="UniProtKB" id="P02234"/>
    </source>
</evidence>
<evidence type="ECO:0000250" key="3">
    <source>
        <dbReference type="UniProtKB" id="P02237"/>
    </source>
</evidence>
<evidence type="ECO:0000250" key="4">
    <source>
        <dbReference type="UniProtKB" id="P02240"/>
    </source>
</evidence>
<evidence type="ECO:0000250" key="5">
    <source>
        <dbReference type="UniProtKB" id="Q3C1F7"/>
    </source>
</evidence>
<evidence type="ECO:0000250" key="6">
    <source>
        <dbReference type="UniProtKB" id="Q43296"/>
    </source>
</evidence>
<evidence type="ECO:0000255" key="7">
    <source>
        <dbReference type="PROSITE-ProRule" id="PRU00238"/>
    </source>
</evidence>
<evidence type="ECO:0000269" key="8">
    <source>
    </source>
</evidence>
<evidence type="ECO:0000269" key="9">
    <source>
    </source>
</evidence>
<evidence type="ECO:0000269" key="10">
    <source>
    </source>
</evidence>
<evidence type="ECO:0000303" key="11">
    <source>
    </source>
</evidence>
<evidence type="ECO:0000303" key="12">
    <source>
    </source>
</evidence>
<evidence type="ECO:0000305" key="13"/>
<dbReference type="EMBL" id="Z54160">
    <property type="protein sequence ID" value="CAA90871.1"/>
    <property type="molecule type" value="mRNA"/>
</dbReference>
<dbReference type="PIR" id="T12131">
    <property type="entry name" value="T12131"/>
</dbReference>
<dbReference type="SMR" id="P93848"/>
<dbReference type="EnsemblPlants" id="Vfaba.Hedin2.R1.3g107160.1">
    <property type="protein sequence ID" value="cds:Vfaba.Hedin2.R1.3g107160.1"/>
    <property type="gene ID" value="Vfaba.Hedin2.R1.3g107160"/>
</dbReference>
<dbReference type="Gramene" id="Vfaba.Hedin2.R1.3g107160.1">
    <property type="protein sequence ID" value="cds:Vfaba.Hedin2.R1.3g107160.1"/>
    <property type="gene ID" value="Vfaba.Hedin2.R1.3g107160"/>
</dbReference>
<dbReference type="OrthoDB" id="2012505at2759"/>
<dbReference type="GO" id="GO:0005829">
    <property type="term" value="C:cytosol"/>
    <property type="evidence" value="ECO:0007669"/>
    <property type="project" value="UniProtKB-SubCell"/>
</dbReference>
<dbReference type="GO" id="GO:0005634">
    <property type="term" value="C:nucleus"/>
    <property type="evidence" value="ECO:0007669"/>
    <property type="project" value="UniProtKB-SubCell"/>
</dbReference>
<dbReference type="GO" id="GO:0020037">
    <property type="term" value="F:heme binding"/>
    <property type="evidence" value="ECO:0007669"/>
    <property type="project" value="InterPro"/>
</dbReference>
<dbReference type="GO" id="GO:0046872">
    <property type="term" value="F:metal ion binding"/>
    <property type="evidence" value="ECO:0007669"/>
    <property type="project" value="UniProtKB-KW"/>
</dbReference>
<dbReference type="GO" id="GO:0019825">
    <property type="term" value="F:oxygen binding"/>
    <property type="evidence" value="ECO:0007669"/>
    <property type="project" value="InterPro"/>
</dbReference>
<dbReference type="GO" id="GO:0005344">
    <property type="term" value="F:oxygen carrier activity"/>
    <property type="evidence" value="ECO:0007669"/>
    <property type="project" value="UniProtKB-KW"/>
</dbReference>
<dbReference type="GO" id="GO:0009877">
    <property type="term" value="P:nodulation"/>
    <property type="evidence" value="ECO:0007669"/>
    <property type="project" value="UniProtKB-KW"/>
</dbReference>
<dbReference type="GO" id="GO:0009737">
    <property type="term" value="P:response to abscisic acid"/>
    <property type="evidence" value="ECO:0007669"/>
    <property type="project" value="UniProtKB-ARBA"/>
</dbReference>
<dbReference type="Gene3D" id="1.10.490.10">
    <property type="entry name" value="Globins"/>
    <property type="match status" value="1"/>
</dbReference>
<dbReference type="InterPro" id="IPR000971">
    <property type="entry name" value="Globin"/>
</dbReference>
<dbReference type="InterPro" id="IPR009050">
    <property type="entry name" value="Globin-like_sf"/>
</dbReference>
<dbReference type="InterPro" id="IPR012292">
    <property type="entry name" value="Globin/Proto"/>
</dbReference>
<dbReference type="InterPro" id="IPR001032">
    <property type="entry name" value="Leghaemoglobin-like"/>
</dbReference>
<dbReference type="PANTHER" id="PTHR22924">
    <property type="entry name" value="LEGHEMOGLOBIN-RELATED"/>
    <property type="match status" value="1"/>
</dbReference>
<dbReference type="PANTHER" id="PTHR22924:SF92">
    <property type="entry name" value="NON-SYMBIOTIC HEMOGLOBIN 2"/>
    <property type="match status" value="1"/>
</dbReference>
<dbReference type="Pfam" id="PF00042">
    <property type="entry name" value="Globin"/>
    <property type="match status" value="1"/>
</dbReference>
<dbReference type="PRINTS" id="PR00188">
    <property type="entry name" value="PLANTGLOBIN"/>
</dbReference>
<dbReference type="SUPFAM" id="SSF46458">
    <property type="entry name" value="Globin-like"/>
    <property type="match status" value="1"/>
</dbReference>
<dbReference type="PROSITE" id="PS01033">
    <property type="entry name" value="GLOBIN"/>
    <property type="match status" value="1"/>
</dbReference>
<reference key="1">
    <citation type="journal article" date="1997" name="Mol. Plant Microbe Interact.">
        <title>The Vicia faba leghemoglobin gene VfLb29 is induced in root nodules and in roots colonized by the arbuscular mycorrhizal fungus Glomus fasciculatum.</title>
        <authorList>
            <person name="Fruehling M."/>
            <person name="Roussel H."/>
            <person name="Gianinazzi-Pearson V."/>
            <person name="Puehler A."/>
            <person name="Perlick A.M."/>
        </authorList>
    </citation>
    <scope>NUCLEOTIDE SEQUENCE [MRNA]</scope>
    <scope>TISSUE SPECIFICITY</scope>
    <source>
        <strain>cv. Kleine Thueringer</strain>
        <tissue>Root nodule</tissue>
    </source>
</reference>
<reference key="2">
    <citation type="journal article" date="2004" name="Mol. Plant Microbe Interact.">
        <title>The promoter of the Vicia faba L. leghemoglobin gene VfLb29 is specifically activated in the infected cells of root nodules and in the arbuscule-containing cells of mycorrhizal roots from different legume and nonlegume plants.</title>
        <authorList>
            <person name="Vieweg M.F."/>
            <person name="Fruehling M."/>
            <person name="Quandt H.J."/>
            <person name="Heim U."/>
            <person name="Baeumlein H."/>
            <person name="Puehler A."/>
            <person name="Kuester H."/>
            <person name="Andreas M.P."/>
        </authorList>
    </citation>
    <scope>TISSUE SPECIFICITY</scope>
    <scope>DEVELOPMENTAL STAGE</scope>
    <source>
        <strain>cv. Kleine Thueringer</strain>
    </source>
</reference>
<reference key="3">
    <citation type="journal article" date="2005" name="J. Exp. Bot.">
        <title>The promoter of the leghaemoglobin gene VfLb29: functional analysis and identification of modules necessary for its activation in the infected cells of root nodules and in the arbuscule-containing cells of mycorrhizal roots.</title>
        <authorList>
            <person name="Fehlberg V."/>
            <person name="Vieweg M.F."/>
            <person name="Dohmann E.M."/>
            <person name="Hohnjec N."/>
            <person name="Puehler A."/>
            <person name="Perlick A.M."/>
            <person name="Kuester H."/>
        </authorList>
    </citation>
    <scope>TISSUE SPECIFICITY</scope>
    <scope>DEVELOPMENTAL STAGE</scope>
    <source>
        <strain>cv. Finale</strain>
    </source>
</reference>